<evidence type="ECO:0000250" key="1"/>
<evidence type="ECO:0000255" key="2">
    <source>
        <dbReference type="PROSITE-ProRule" id="PRU10011"/>
    </source>
</evidence>
<evidence type="ECO:0000305" key="3"/>
<evidence type="ECO:0000305" key="4">
    <source>
    </source>
</evidence>
<name>DHE_HALSA</name>
<dbReference type="EC" id="1.4.1.-"/>
<dbReference type="EMBL" id="AE004437">
    <property type="protein sequence ID" value="AAG19574.1"/>
    <property type="molecule type" value="Genomic_DNA"/>
</dbReference>
<dbReference type="PIR" id="B84276">
    <property type="entry name" value="B84276"/>
</dbReference>
<dbReference type="RefSeq" id="WP_010902870.1">
    <property type="nucleotide sequence ID" value="NC_002607.1"/>
</dbReference>
<dbReference type="SMR" id="Q9HQE1"/>
<dbReference type="STRING" id="64091.VNG_1204G"/>
<dbReference type="PaxDb" id="64091-VNG_1204G"/>
<dbReference type="GeneID" id="89349552"/>
<dbReference type="KEGG" id="hal:VNG_1204G"/>
<dbReference type="PATRIC" id="fig|64091.14.peg.922"/>
<dbReference type="HOGENOM" id="CLU_025763_1_2_2"/>
<dbReference type="InParanoid" id="Q9HQE1"/>
<dbReference type="OrthoDB" id="6425at2157"/>
<dbReference type="PhylomeDB" id="Q9HQE1"/>
<dbReference type="Proteomes" id="UP000000554">
    <property type="component" value="Chromosome"/>
</dbReference>
<dbReference type="GO" id="GO:0004352">
    <property type="term" value="F:glutamate dehydrogenase (NAD+) activity"/>
    <property type="evidence" value="ECO:0000318"/>
    <property type="project" value="GO_Central"/>
</dbReference>
<dbReference type="GO" id="GO:0006538">
    <property type="term" value="P:glutamate catabolic process"/>
    <property type="evidence" value="ECO:0000318"/>
    <property type="project" value="GO_Central"/>
</dbReference>
<dbReference type="CDD" id="cd01076">
    <property type="entry name" value="NAD_bind_1_Glu_DH"/>
    <property type="match status" value="1"/>
</dbReference>
<dbReference type="FunFam" id="3.40.50.10860:FF:000003">
    <property type="entry name" value="Glutamate dehydrogenase"/>
    <property type="match status" value="1"/>
</dbReference>
<dbReference type="Gene3D" id="3.40.50.10860">
    <property type="entry name" value="Leucine Dehydrogenase, chain A, domain 1"/>
    <property type="match status" value="1"/>
</dbReference>
<dbReference type="Gene3D" id="3.40.50.720">
    <property type="entry name" value="NAD(P)-binding Rossmann-like Domain"/>
    <property type="match status" value="1"/>
</dbReference>
<dbReference type="InterPro" id="IPR046346">
    <property type="entry name" value="Aminoacid_DH-like_N_sf"/>
</dbReference>
<dbReference type="InterPro" id="IPR006095">
    <property type="entry name" value="Glu/Leu/Phe/Val/Trp_DH"/>
</dbReference>
<dbReference type="InterPro" id="IPR006096">
    <property type="entry name" value="Glu/Leu/Phe/Val/Trp_DH_C"/>
</dbReference>
<dbReference type="InterPro" id="IPR006097">
    <property type="entry name" value="Glu/Leu/Phe/Val/Trp_DH_dimer"/>
</dbReference>
<dbReference type="InterPro" id="IPR033524">
    <property type="entry name" value="Glu/Leu/Phe/Val_DH_AS"/>
</dbReference>
<dbReference type="InterPro" id="IPR014362">
    <property type="entry name" value="Glu_DH"/>
</dbReference>
<dbReference type="InterPro" id="IPR036291">
    <property type="entry name" value="NAD(P)-bd_dom_sf"/>
</dbReference>
<dbReference type="InterPro" id="IPR033922">
    <property type="entry name" value="NAD_bind_Glu_DH"/>
</dbReference>
<dbReference type="PANTHER" id="PTHR11606">
    <property type="entry name" value="GLUTAMATE DEHYDROGENASE"/>
    <property type="match status" value="1"/>
</dbReference>
<dbReference type="PANTHER" id="PTHR11606:SF13">
    <property type="entry name" value="GLUTAMATE DEHYDROGENASE 1, MITOCHONDRIAL"/>
    <property type="match status" value="1"/>
</dbReference>
<dbReference type="Pfam" id="PF00208">
    <property type="entry name" value="ELFV_dehydrog"/>
    <property type="match status" value="1"/>
</dbReference>
<dbReference type="Pfam" id="PF02812">
    <property type="entry name" value="ELFV_dehydrog_N"/>
    <property type="match status" value="1"/>
</dbReference>
<dbReference type="PIRSF" id="PIRSF000185">
    <property type="entry name" value="Glu_DH"/>
    <property type="match status" value="1"/>
</dbReference>
<dbReference type="PRINTS" id="PR00082">
    <property type="entry name" value="GLFDHDRGNASE"/>
</dbReference>
<dbReference type="SMART" id="SM00839">
    <property type="entry name" value="ELFV_dehydrog"/>
    <property type="match status" value="1"/>
</dbReference>
<dbReference type="SUPFAM" id="SSF53223">
    <property type="entry name" value="Aminoacid dehydrogenase-like, N-terminal domain"/>
    <property type="match status" value="1"/>
</dbReference>
<dbReference type="SUPFAM" id="SSF51735">
    <property type="entry name" value="NAD(P)-binding Rossmann-fold domains"/>
    <property type="match status" value="1"/>
</dbReference>
<dbReference type="PROSITE" id="PS00074">
    <property type="entry name" value="GLFV_DEHYDROGENASE"/>
    <property type="match status" value="1"/>
</dbReference>
<accession>Q9HQE1</accession>
<accession>Q5MBG1</accession>
<sequence>MTESGPLENMLAQMEQAREYVDIDDGIYERLKSPERTLSVSLPVRMDDGSVEVFDAYRCQFDSARGPYKGGIRYHPTVSEEEVSALAGWMTWKTALVDLPFGGAKGGIVCNPKELSDNEIEQLTRRYTEGIRRMIGPETDIPAPDMNTDPRTMAWVMDTYSVYQGYAVPEVVTGKPPEIGGTDGRVEATGRGVSIITEETFEYFDTDIQDADVAIQGFGNVGSVTADLLSERGANIVAVSDVTGAIHDPTGLDIADVQAYADANGGRLEGYDAEPISNDDLLTLDVDALIPAAIEDVITVDVAERLAADVIVEAANGPTTFDAAQVLSDRGVPVVPDILANAGGVIVSYLEWVQNSQQYSWDVEEVNRDLRQRLTGAFDEMLVAYEDRNIPTLRTAAYTIALERSADAHEFRGLFP</sequence>
<keyword id="KW-0560">Oxidoreductase</keyword>
<keyword id="KW-1185">Reference proteome</keyword>
<feature type="chain" id="PRO_0000428792" description="Glutamate dehydrogenase A2">
    <location>
        <begin position="1"/>
        <end position="416"/>
    </location>
</feature>
<feature type="active site" evidence="2">
    <location>
        <position position="105"/>
    </location>
</feature>
<gene>
    <name type="primary">gdhA2</name>
    <name type="ordered locus">VNG_1204G</name>
</gene>
<organism>
    <name type="scientific">Halobacterium salinarum (strain ATCC 700922 / JCM 11081 / NRC-1)</name>
    <name type="common">Halobacterium halobium</name>
    <dbReference type="NCBI Taxonomy" id="64091"/>
    <lineage>
        <taxon>Archaea</taxon>
        <taxon>Methanobacteriati</taxon>
        <taxon>Methanobacteriota</taxon>
        <taxon>Stenosarchaea group</taxon>
        <taxon>Halobacteria</taxon>
        <taxon>Halobacteriales</taxon>
        <taxon>Halobacteriaceae</taxon>
        <taxon>Halobacterium</taxon>
        <taxon>Halobacterium salinarum NRC-34001</taxon>
    </lineage>
</organism>
<reference key="1">
    <citation type="journal article" date="2000" name="Proc. Natl. Acad. Sci. U.S.A.">
        <title>Genome sequence of Halobacterium species NRC-1.</title>
        <authorList>
            <person name="Ng W.V."/>
            <person name="Kennedy S.P."/>
            <person name="Mahairas G.G."/>
            <person name="Berquist B."/>
            <person name="Pan M."/>
            <person name="Shukla H.D."/>
            <person name="Lasky S.R."/>
            <person name="Baliga N.S."/>
            <person name="Thorsson V."/>
            <person name="Sbrogna J."/>
            <person name="Swartzell S."/>
            <person name="Weir D."/>
            <person name="Hall J."/>
            <person name="Dahl T.A."/>
            <person name="Welti R."/>
            <person name="Goo Y.A."/>
            <person name="Leithauser B."/>
            <person name="Keller K."/>
            <person name="Cruz R."/>
            <person name="Danson M.J."/>
            <person name="Hough D.W."/>
            <person name="Maddocks D.G."/>
            <person name="Jablonski P.E."/>
            <person name="Krebs M.P."/>
            <person name="Angevine C.M."/>
            <person name="Dale H."/>
            <person name="Isenbarger T.A."/>
            <person name="Peck R.F."/>
            <person name="Pohlschroder M."/>
            <person name="Spudich J.L."/>
            <person name="Jung K.-H."/>
            <person name="Alam M."/>
            <person name="Freitas T."/>
            <person name="Hou S."/>
            <person name="Daniels C.J."/>
            <person name="Dennis P.P."/>
            <person name="Omer A.D."/>
            <person name="Ebhardt H."/>
            <person name="Lowe T.M."/>
            <person name="Liang P."/>
            <person name="Riley M."/>
            <person name="Hood L."/>
            <person name="DasSarma S."/>
        </authorList>
    </citation>
    <scope>NUCLEOTIDE SEQUENCE [LARGE SCALE GENOMIC DNA]</scope>
    <source>
        <strain>ATCC 700922 / JCM 11081 / NRC-1</strain>
    </source>
</reference>
<reference key="2">
    <citation type="journal article" date="2005" name="Gene">
        <title>The discovery of four distinct glutamate dehydrogenase genes in a strain of Halobacterium salinarum.</title>
        <authorList>
            <person name="Ingoldsby L.M."/>
            <person name="Geoghegan K.F."/>
            <person name="Hayden B.M."/>
            <person name="Engel P.C."/>
        </authorList>
    </citation>
    <scope>IDENTIFICATION</scope>
    <source>
        <strain>ATCC 700922 / JCM 11081 / NRC-1</strain>
    </source>
</reference>
<protein>
    <recommendedName>
        <fullName>Glutamate dehydrogenase A2</fullName>
        <ecNumber>1.4.1.-</ecNumber>
    </recommendedName>
</protein>
<proteinExistence type="inferred from homology"/>
<comment type="subunit">
    <text evidence="1">Homohexamer.</text>
</comment>
<comment type="miscellaneous">
    <text evidence="4">Strain NRC-36014 contains 4 distinct glutamate dehydrogenases while strain NRC-1 contains only 3.</text>
</comment>
<comment type="similarity">
    <text evidence="3">Belongs to the Glu/Leu/Phe/Val dehydrogenases family.</text>
</comment>